<sequence>MSFTGTLDKCNVCDKTVYVVDMLSIEGMPYHKSCFRCTHCKGTLQMSNYSSMDGVLYCKTHFEQLFKESGNFSKNFQPGKTEKPELTRTPSKISSIFCGTQDKCAACEKTVYPLEKIQMEGECFHKTCFRCAHGGCTLTHSSYASLDSVLYCRHHFNQLFMEKGNYAHVLQAANHRRTASGNTLPPEPTEDVAVEAKEENGVSES</sequence>
<comment type="function">
    <text evidence="3">Binds to actin filaments and promotes cross-linking into thick bundles. Has an actin-stabilizing activity. The actin regulatory activities are inhibited by pH &gt; 6.8 but are [Ca(2+)] independent.</text>
</comment>
<comment type="subunit">
    <text evidence="3">Interacts with F-actin.</text>
</comment>
<comment type="subcellular location">
    <subcellularLocation>
        <location evidence="3">Cytoplasm</location>
        <location evidence="3">Cytoskeleton</location>
    </subcellularLocation>
</comment>
<comment type="tissue specificity">
    <text evidence="3">Predominantly expressed in flowers and in pollen grains. Detected in vasculature and roots.</text>
</comment>
<comment type="miscellaneous">
    <text evidence="3">Cross-links actin with a constant of dissociation of 1.7 uM.</text>
</comment>
<comment type="sequence caution" evidence="5">
    <conflict type="erroneous initiation">
        <sequence resource="EMBL-CDS" id="AAF78411"/>
    </conflict>
    <text>Extended N-terminus.</text>
</comment>
<reference key="1">
    <citation type="journal article" date="2000" name="Nature">
        <title>Sequence and analysis of chromosome 1 of the plant Arabidopsis thaliana.</title>
        <authorList>
            <person name="Theologis A."/>
            <person name="Ecker J.R."/>
            <person name="Palm C.J."/>
            <person name="Federspiel N.A."/>
            <person name="Kaul S."/>
            <person name="White O."/>
            <person name="Alonso J."/>
            <person name="Altafi H."/>
            <person name="Araujo R."/>
            <person name="Bowman C.L."/>
            <person name="Brooks S.Y."/>
            <person name="Buehler E."/>
            <person name="Chan A."/>
            <person name="Chao Q."/>
            <person name="Chen H."/>
            <person name="Cheuk R.F."/>
            <person name="Chin C.W."/>
            <person name="Chung M.K."/>
            <person name="Conn L."/>
            <person name="Conway A.B."/>
            <person name="Conway A.R."/>
            <person name="Creasy T.H."/>
            <person name="Dewar K."/>
            <person name="Dunn P."/>
            <person name="Etgu P."/>
            <person name="Feldblyum T.V."/>
            <person name="Feng J.-D."/>
            <person name="Fong B."/>
            <person name="Fujii C.Y."/>
            <person name="Gill J.E."/>
            <person name="Goldsmith A.D."/>
            <person name="Haas B."/>
            <person name="Hansen N.F."/>
            <person name="Hughes B."/>
            <person name="Huizar L."/>
            <person name="Hunter J.L."/>
            <person name="Jenkins J."/>
            <person name="Johnson-Hopson C."/>
            <person name="Khan S."/>
            <person name="Khaykin E."/>
            <person name="Kim C.J."/>
            <person name="Koo H.L."/>
            <person name="Kremenetskaia I."/>
            <person name="Kurtz D.B."/>
            <person name="Kwan A."/>
            <person name="Lam B."/>
            <person name="Langin-Hooper S."/>
            <person name="Lee A."/>
            <person name="Lee J.M."/>
            <person name="Lenz C.A."/>
            <person name="Li J.H."/>
            <person name="Li Y.-P."/>
            <person name="Lin X."/>
            <person name="Liu S.X."/>
            <person name="Liu Z.A."/>
            <person name="Luros J.S."/>
            <person name="Maiti R."/>
            <person name="Marziali A."/>
            <person name="Militscher J."/>
            <person name="Miranda M."/>
            <person name="Nguyen M."/>
            <person name="Nierman W.C."/>
            <person name="Osborne B.I."/>
            <person name="Pai G."/>
            <person name="Peterson J."/>
            <person name="Pham P.K."/>
            <person name="Rizzo M."/>
            <person name="Rooney T."/>
            <person name="Rowley D."/>
            <person name="Sakano H."/>
            <person name="Salzberg S.L."/>
            <person name="Schwartz J.R."/>
            <person name="Shinn P."/>
            <person name="Southwick A.M."/>
            <person name="Sun H."/>
            <person name="Tallon L.J."/>
            <person name="Tambunga G."/>
            <person name="Toriumi M.J."/>
            <person name="Town C.D."/>
            <person name="Utterback T."/>
            <person name="Van Aken S."/>
            <person name="Vaysberg M."/>
            <person name="Vysotskaia V.S."/>
            <person name="Walker M."/>
            <person name="Wu D."/>
            <person name="Yu G."/>
            <person name="Fraser C.M."/>
            <person name="Venter J.C."/>
            <person name="Davis R.W."/>
        </authorList>
    </citation>
    <scope>NUCLEOTIDE SEQUENCE [LARGE SCALE GENOMIC DNA]</scope>
    <source>
        <strain>cv. Columbia</strain>
    </source>
</reference>
<reference key="2">
    <citation type="journal article" date="2017" name="Plant J.">
        <title>Araport11: a complete reannotation of the Arabidopsis thaliana reference genome.</title>
        <authorList>
            <person name="Cheng C.Y."/>
            <person name="Krishnakumar V."/>
            <person name="Chan A.P."/>
            <person name="Thibaud-Nissen F."/>
            <person name="Schobel S."/>
            <person name="Town C.D."/>
        </authorList>
    </citation>
    <scope>GENOME REANNOTATION</scope>
    <source>
        <strain>cv. Columbia</strain>
    </source>
</reference>
<reference key="3">
    <citation type="journal article" date="2009" name="DNA Res.">
        <title>Analysis of multiple occurrences of alternative splicing events in Arabidopsis thaliana using novel sequenced full-length cDNAs.</title>
        <authorList>
            <person name="Iida K."/>
            <person name="Fukami-Kobayashi K."/>
            <person name="Toyoda A."/>
            <person name="Sakaki Y."/>
            <person name="Kobayashi M."/>
            <person name="Seki M."/>
            <person name="Shinozaki K."/>
        </authorList>
    </citation>
    <scope>NUCLEOTIDE SEQUENCE [LARGE SCALE MRNA]</scope>
    <source>
        <strain>cv. Columbia</strain>
        <tissue>Root</tissue>
    </source>
</reference>
<reference key="4">
    <citation type="submission" date="2006-06" db="EMBL/GenBank/DDBJ databases">
        <title>Arabidopsis ORF clones.</title>
        <authorList>
            <person name="Kim C.J."/>
            <person name="Chen H."/>
            <person name="Quinitio C."/>
            <person name="Shinn P."/>
            <person name="Ecker J.R."/>
        </authorList>
    </citation>
    <scope>NUCLEOTIDE SEQUENCE [LARGE SCALE MRNA]</scope>
    <source>
        <strain>cv. Columbia</strain>
    </source>
</reference>
<reference key="5">
    <citation type="journal article" date="2007" name="DNA Res.">
        <title>Genome-wide analysis of LIM gene family in Populus trichocarpa, Arabidopsis thaliana, and Oryza sativa.</title>
        <authorList>
            <person name="Arnaud D."/>
            <person name="Dejardin A."/>
            <person name="Leple J.C."/>
            <person name="Lesage-Descauses M.C."/>
            <person name="Pilate G."/>
        </authorList>
    </citation>
    <scope>GENE FAMILY</scope>
    <scope>NOMENCLATURE</scope>
</reference>
<reference key="6">
    <citation type="journal article" date="2010" name="Plant Cell">
        <title>Arabidopsis LIM proteins: a family of actin bundlers with distinct expression patterns and modes of regulation.</title>
        <authorList>
            <person name="Papuga J."/>
            <person name="Hoffmann C."/>
            <person name="Dieterle M."/>
            <person name="Moes D."/>
            <person name="Moreau F."/>
            <person name="Tholl S."/>
            <person name="Steinmetz A."/>
            <person name="Thomas C."/>
        </authorList>
    </citation>
    <scope>FUNCTION</scope>
    <scope>TISSUE SPECIFICITY</scope>
    <scope>SUBCELLULAR LOCATION</scope>
    <scope>INTERACTION WITH F-ACTIN</scope>
</reference>
<proteinExistence type="evidence at protein level"/>
<gene>
    <name evidence="4" type="primary">PLIM2B</name>
    <name evidence="6" type="ordered locus">At1g01780</name>
    <name evidence="7" type="ORF">T1N6.19</name>
</gene>
<feature type="chain" id="PRO_0000430596" description="LIM domain-containing protein PLIM2b">
    <location>
        <begin position="1"/>
        <end position="205"/>
    </location>
</feature>
<feature type="domain" description="LIM zinc-binding 1" evidence="1">
    <location>
        <begin position="8"/>
        <end position="68"/>
    </location>
</feature>
<feature type="domain" description="LIM zinc-binding 2" evidence="1">
    <location>
        <begin position="102"/>
        <end position="162"/>
    </location>
</feature>
<feature type="region of interest" description="Disordered" evidence="2">
    <location>
        <begin position="177"/>
        <end position="205"/>
    </location>
</feature>
<feature type="compositionally biased region" description="Basic and acidic residues" evidence="2">
    <location>
        <begin position="194"/>
        <end position="205"/>
    </location>
</feature>
<organism evidence="8">
    <name type="scientific">Arabidopsis thaliana</name>
    <name type="common">Mouse-ear cress</name>
    <dbReference type="NCBI Taxonomy" id="3702"/>
    <lineage>
        <taxon>Eukaryota</taxon>
        <taxon>Viridiplantae</taxon>
        <taxon>Streptophyta</taxon>
        <taxon>Embryophyta</taxon>
        <taxon>Tracheophyta</taxon>
        <taxon>Spermatophyta</taxon>
        <taxon>Magnoliopsida</taxon>
        <taxon>eudicotyledons</taxon>
        <taxon>Gunneridae</taxon>
        <taxon>Pentapetalae</taxon>
        <taxon>rosids</taxon>
        <taxon>malvids</taxon>
        <taxon>Brassicales</taxon>
        <taxon>Brassicaceae</taxon>
        <taxon>Camelineae</taxon>
        <taxon>Arabidopsis</taxon>
    </lineage>
</organism>
<evidence type="ECO:0000255" key="1">
    <source>
        <dbReference type="PROSITE-ProRule" id="PRU00125"/>
    </source>
</evidence>
<evidence type="ECO:0000256" key="2">
    <source>
        <dbReference type="SAM" id="MobiDB-lite"/>
    </source>
</evidence>
<evidence type="ECO:0000269" key="3">
    <source>
    </source>
</evidence>
<evidence type="ECO:0000303" key="4">
    <source>
    </source>
</evidence>
<evidence type="ECO:0000305" key="5"/>
<evidence type="ECO:0000312" key="6">
    <source>
        <dbReference type="Araport" id="AT1G01780"/>
    </source>
</evidence>
<evidence type="ECO:0000312" key="7">
    <source>
        <dbReference type="EMBL" id="AAF78411.1"/>
    </source>
</evidence>
<evidence type="ECO:0000312" key="8">
    <source>
        <dbReference type="EMBL" id="ABF83669.1"/>
    </source>
</evidence>
<keyword id="KW-0009">Actin-binding</keyword>
<keyword id="KW-0963">Cytoplasm</keyword>
<keyword id="KW-0206">Cytoskeleton</keyword>
<keyword id="KW-0440">LIM domain</keyword>
<keyword id="KW-0479">Metal-binding</keyword>
<keyword id="KW-1185">Reference proteome</keyword>
<keyword id="KW-0677">Repeat</keyword>
<keyword id="KW-0862">Zinc</keyword>
<dbReference type="EMBL" id="AC009273">
    <property type="protein sequence ID" value="AAF78411.1"/>
    <property type="status" value="ALT_INIT"/>
    <property type="molecule type" value="Genomic_DNA"/>
</dbReference>
<dbReference type="EMBL" id="CP002684">
    <property type="protein sequence ID" value="AEE27334.1"/>
    <property type="molecule type" value="Genomic_DNA"/>
</dbReference>
<dbReference type="EMBL" id="AK317367">
    <property type="protein sequence ID" value="BAH20039.1"/>
    <property type="molecule type" value="mRNA"/>
</dbReference>
<dbReference type="EMBL" id="BT025779">
    <property type="protein sequence ID" value="ABF83669.1"/>
    <property type="molecule type" value="mRNA"/>
</dbReference>
<dbReference type="PIR" id="D86149">
    <property type="entry name" value="D86149"/>
</dbReference>
<dbReference type="RefSeq" id="NP_171683.1">
    <property type="nucleotide sequence ID" value="NM_100061.3"/>
</dbReference>
<dbReference type="BioGRID" id="24502">
    <property type="interactions" value="10"/>
</dbReference>
<dbReference type="FunCoup" id="Q1ECF5">
    <property type="interactions" value="428"/>
</dbReference>
<dbReference type="IntAct" id="Q1ECF5">
    <property type="interactions" value="11"/>
</dbReference>
<dbReference type="STRING" id="3702.Q1ECF5"/>
<dbReference type="iPTMnet" id="Q1ECF5"/>
<dbReference type="PaxDb" id="3702-AT1G01780.1"/>
<dbReference type="ProteomicsDB" id="234918"/>
<dbReference type="EnsemblPlants" id="AT1G01780.1">
    <property type="protein sequence ID" value="AT1G01780.1"/>
    <property type="gene ID" value="AT1G01780"/>
</dbReference>
<dbReference type="GeneID" id="839267"/>
<dbReference type="Gramene" id="AT1G01780.1">
    <property type="protein sequence ID" value="AT1G01780.1"/>
    <property type="gene ID" value="AT1G01780"/>
</dbReference>
<dbReference type="KEGG" id="ath:AT1G01780"/>
<dbReference type="Araport" id="AT1G01780"/>
<dbReference type="TAIR" id="AT1G01780">
    <property type="gene designation" value="PLIM2B"/>
</dbReference>
<dbReference type="eggNOG" id="KOG1700">
    <property type="taxonomic scope" value="Eukaryota"/>
</dbReference>
<dbReference type="HOGENOM" id="CLU_026811_1_0_1"/>
<dbReference type="InParanoid" id="Q1ECF5"/>
<dbReference type="OMA" id="SKKEMAF"/>
<dbReference type="OrthoDB" id="6129702at2759"/>
<dbReference type="PRO" id="PR:Q1ECF5"/>
<dbReference type="Proteomes" id="UP000006548">
    <property type="component" value="Chromosome 1"/>
</dbReference>
<dbReference type="ExpressionAtlas" id="Q1ECF5">
    <property type="expression patterns" value="baseline and differential"/>
</dbReference>
<dbReference type="GO" id="GO:0005737">
    <property type="term" value="C:cytoplasm"/>
    <property type="evidence" value="ECO:0007669"/>
    <property type="project" value="UniProtKB-KW"/>
</dbReference>
<dbReference type="GO" id="GO:0005856">
    <property type="term" value="C:cytoskeleton"/>
    <property type="evidence" value="ECO:0007669"/>
    <property type="project" value="UniProtKB-SubCell"/>
</dbReference>
<dbReference type="GO" id="GO:0051015">
    <property type="term" value="F:actin filament binding"/>
    <property type="evidence" value="ECO:0000314"/>
    <property type="project" value="TAIR"/>
</dbReference>
<dbReference type="GO" id="GO:0046872">
    <property type="term" value="F:metal ion binding"/>
    <property type="evidence" value="ECO:0007669"/>
    <property type="project" value="UniProtKB-KW"/>
</dbReference>
<dbReference type="GO" id="GO:0000976">
    <property type="term" value="F:transcription cis-regulatory region binding"/>
    <property type="evidence" value="ECO:0000353"/>
    <property type="project" value="TAIR"/>
</dbReference>
<dbReference type="GO" id="GO:0051017">
    <property type="term" value="P:actin filament bundle assembly"/>
    <property type="evidence" value="ECO:0000314"/>
    <property type="project" value="TAIR"/>
</dbReference>
<dbReference type="CDD" id="cd09440">
    <property type="entry name" value="LIM1_SF3"/>
    <property type="match status" value="1"/>
</dbReference>
<dbReference type="FunFam" id="2.10.110.10:FF:000002">
    <property type="entry name" value="LIM domain and actin-binding 1"/>
    <property type="match status" value="2"/>
</dbReference>
<dbReference type="Gene3D" id="2.10.110.10">
    <property type="entry name" value="Cysteine Rich Protein"/>
    <property type="match status" value="2"/>
</dbReference>
<dbReference type="InterPro" id="IPR001781">
    <property type="entry name" value="Znf_LIM"/>
</dbReference>
<dbReference type="PANTHER" id="PTHR24206">
    <property type="entry name" value="OS06G0237300 PROTEIN"/>
    <property type="match status" value="1"/>
</dbReference>
<dbReference type="Pfam" id="PF00412">
    <property type="entry name" value="LIM"/>
    <property type="match status" value="2"/>
</dbReference>
<dbReference type="SMART" id="SM00132">
    <property type="entry name" value="LIM"/>
    <property type="match status" value="2"/>
</dbReference>
<dbReference type="SUPFAM" id="SSF57716">
    <property type="entry name" value="Glucocorticoid receptor-like (DNA-binding domain)"/>
    <property type="match status" value="4"/>
</dbReference>
<dbReference type="PROSITE" id="PS00478">
    <property type="entry name" value="LIM_DOMAIN_1"/>
    <property type="match status" value="1"/>
</dbReference>
<dbReference type="PROSITE" id="PS50023">
    <property type="entry name" value="LIM_DOMAIN_2"/>
    <property type="match status" value="2"/>
</dbReference>
<protein>
    <recommendedName>
        <fullName evidence="5">LIM domain-containing protein PLIM2b</fullName>
    </recommendedName>
    <alternativeName>
        <fullName evidence="5">Pollen-expressed LIM protein 2B</fullName>
    </alternativeName>
</protein>
<name>PLI2B_ARATH</name>
<accession>Q1ECF5</accession>
<accession>Q9LQ78</accession>